<evidence type="ECO:0000255" key="1">
    <source>
        <dbReference type="HAMAP-Rule" id="MF_00484"/>
    </source>
</evidence>
<accession>A1WW18</accession>
<reference key="1">
    <citation type="submission" date="2006-12" db="EMBL/GenBank/DDBJ databases">
        <title>Complete sequence of Halorhodospira halophila SL1.</title>
        <authorList>
            <consortium name="US DOE Joint Genome Institute"/>
            <person name="Copeland A."/>
            <person name="Lucas S."/>
            <person name="Lapidus A."/>
            <person name="Barry K."/>
            <person name="Detter J.C."/>
            <person name="Glavina del Rio T."/>
            <person name="Hammon N."/>
            <person name="Israni S."/>
            <person name="Dalin E."/>
            <person name="Tice H."/>
            <person name="Pitluck S."/>
            <person name="Saunders E."/>
            <person name="Brettin T."/>
            <person name="Bruce D."/>
            <person name="Han C."/>
            <person name="Tapia R."/>
            <person name="Schmutz J."/>
            <person name="Larimer F."/>
            <person name="Land M."/>
            <person name="Hauser L."/>
            <person name="Kyrpides N."/>
            <person name="Mikhailova N."/>
            <person name="Hoff W."/>
            <person name="Richardson P."/>
        </authorList>
    </citation>
    <scope>NUCLEOTIDE SEQUENCE [LARGE SCALE GENOMIC DNA]</scope>
    <source>
        <strain>DSM 244 / SL1</strain>
    </source>
</reference>
<keyword id="KW-0320">Glycogen biosynthesis</keyword>
<keyword id="KW-0328">Glycosyltransferase</keyword>
<keyword id="KW-1185">Reference proteome</keyword>
<keyword id="KW-0808">Transferase</keyword>
<gene>
    <name evidence="1" type="primary">glgA</name>
    <name type="ordered locus">Hhal_1104</name>
</gene>
<proteinExistence type="inferred from homology"/>
<comment type="function">
    <text evidence="1">Synthesizes alpha-1,4-glucan chains using ADP-glucose.</text>
</comment>
<comment type="catalytic activity">
    <reaction evidence="1">
        <text>[(1-&gt;4)-alpha-D-glucosyl](n) + ADP-alpha-D-glucose = [(1-&gt;4)-alpha-D-glucosyl](n+1) + ADP + H(+)</text>
        <dbReference type="Rhea" id="RHEA:18189"/>
        <dbReference type="Rhea" id="RHEA-COMP:9584"/>
        <dbReference type="Rhea" id="RHEA-COMP:9587"/>
        <dbReference type="ChEBI" id="CHEBI:15378"/>
        <dbReference type="ChEBI" id="CHEBI:15444"/>
        <dbReference type="ChEBI" id="CHEBI:57498"/>
        <dbReference type="ChEBI" id="CHEBI:456216"/>
        <dbReference type="EC" id="2.4.1.21"/>
    </reaction>
</comment>
<comment type="pathway">
    <text evidence="1">Glycan biosynthesis; glycogen biosynthesis.</text>
</comment>
<comment type="similarity">
    <text evidence="1">Belongs to the glycosyltransferase 1 family. Bacterial/plant glycogen synthase subfamily.</text>
</comment>
<organism>
    <name type="scientific">Halorhodospira halophila (strain DSM 244 / SL1)</name>
    <name type="common">Ectothiorhodospira halophila (strain DSM 244 / SL1)</name>
    <dbReference type="NCBI Taxonomy" id="349124"/>
    <lineage>
        <taxon>Bacteria</taxon>
        <taxon>Pseudomonadati</taxon>
        <taxon>Pseudomonadota</taxon>
        <taxon>Gammaproteobacteria</taxon>
        <taxon>Chromatiales</taxon>
        <taxon>Ectothiorhodospiraceae</taxon>
        <taxon>Halorhodospira</taxon>
    </lineage>
</organism>
<feature type="chain" id="PRO_1000014365" description="Glycogen synthase">
    <location>
        <begin position="1"/>
        <end position="477"/>
    </location>
</feature>
<feature type="binding site" evidence="1">
    <location>
        <position position="15"/>
    </location>
    <ligand>
        <name>ADP-alpha-D-glucose</name>
        <dbReference type="ChEBI" id="CHEBI:57498"/>
    </ligand>
</feature>
<dbReference type="EC" id="2.4.1.21" evidence="1"/>
<dbReference type="EMBL" id="CP000544">
    <property type="protein sequence ID" value="ABM61880.1"/>
    <property type="molecule type" value="Genomic_DNA"/>
</dbReference>
<dbReference type="RefSeq" id="WP_011813903.1">
    <property type="nucleotide sequence ID" value="NC_008789.1"/>
</dbReference>
<dbReference type="SMR" id="A1WW18"/>
<dbReference type="STRING" id="349124.Hhal_1104"/>
<dbReference type="CAZy" id="GT5">
    <property type="family name" value="Glycosyltransferase Family 5"/>
</dbReference>
<dbReference type="KEGG" id="hha:Hhal_1104"/>
<dbReference type="eggNOG" id="COG0297">
    <property type="taxonomic scope" value="Bacteria"/>
</dbReference>
<dbReference type="HOGENOM" id="CLU_009583_18_2_6"/>
<dbReference type="OrthoDB" id="9808590at2"/>
<dbReference type="UniPathway" id="UPA00164"/>
<dbReference type="Proteomes" id="UP000000647">
    <property type="component" value="Chromosome"/>
</dbReference>
<dbReference type="GO" id="GO:0005829">
    <property type="term" value="C:cytosol"/>
    <property type="evidence" value="ECO:0007669"/>
    <property type="project" value="TreeGrafter"/>
</dbReference>
<dbReference type="GO" id="GO:0009011">
    <property type="term" value="F:alpha-1,4-glucan glucosyltransferase (ADP-glucose donor) activity"/>
    <property type="evidence" value="ECO:0007669"/>
    <property type="project" value="UniProtKB-UniRule"/>
</dbReference>
<dbReference type="GO" id="GO:0004373">
    <property type="term" value="F:alpha-1,4-glucan glucosyltransferase (UDP-glucose donor) activity"/>
    <property type="evidence" value="ECO:0007669"/>
    <property type="project" value="InterPro"/>
</dbReference>
<dbReference type="GO" id="GO:0005978">
    <property type="term" value="P:glycogen biosynthetic process"/>
    <property type="evidence" value="ECO:0007669"/>
    <property type="project" value="UniProtKB-UniRule"/>
</dbReference>
<dbReference type="CDD" id="cd03791">
    <property type="entry name" value="GT5_Glycogen_synthase_DULL1-like"/>
    <property type="match status" value="1"/>
</dbReference>
<dbReference type="Gene3D" id="3.40.50.2000">
    <property type="entry name" value="Glycogen Phosphorylase B"/>
    <property type="match status" value="2"/>
</dbReference>
<dbReference type="HAMAP" id="MF_00484">
    <property type="entry name" value="Glycogen_synth"/>
    <property type="match status" value="1"/>
</dbReference>
<dbReference type="InterPro" id="IPR001296">
    <property type="entry name" value="Glyco_trans_1"/>
</dbReference>
<dbReference type="InterPro" id="IPR011835">
    <property type="entry name" value="GS/SS"/>
</dbReference>
<dbReference type="InterPro" id="IPR013534">
    <property type="entry name" value="Starch_synth_cat_dom"/>
</dbReference>
<dbReference type="NCBIfam" id="TIGR02095">
    <property type="entry name" value="glgA"/>
    <property type="match status" value="1"/>
</dbReference>
<dbReference type="NCBIfam" id="NF001899">
    <property type="entry name" value="PRK00654.1-2"/>
    <property type="match status" value="1"/>
</dbReference>
<dbReference type="PANTHER" id="PTHR45825:SF11">
    <property type="entry name" value="ALPHA AMYLASE DOMAIN-CONTAINING PROTEIN"/>
    <property type="match status" value="1"/>
</dbReference>
<dbReference type="PANTHER" id="PTHR45825">
    <property type="entry name" value="GRANULE-BOUND STARCH SYNTHASE 1, CHLOROPLASTIC/AMYLOPLASTIC"/>
    <property type="match status" value="1"/>
</dbReference>
<dbReference type="Pfam" id="PF08323">
    <property type="entry name" value="Glyco_transf_5"/>
    <property type="match status" value="1"/>
</dbReference>
<dbReference type="Pfam" id="PF00534">
    <property type="entry name" value="Glycos_transf_1"/>
    <property type="match status" value="1"/>
</dbReference>
<dbReference type="SUPFAM" id="SSF53756">
    <property type="entry name" value="UDP-Glycosyltransferase/glycogen phosphorylase"/>
    <property type="match status" value="1"/>
</dbReference>
<name>GLGA_HALHL</name>
<sequence length="477" mass="51212">MRVLFATAEAWPLAKTGGLGDVAFGLTRALAELDCDVRLLMPAYPGTVEQLEGEVRRHTAELAGEGVTLIEGRLPGTGVGVWLLDDPPLFARVGGPYATAGGDAWPDNHWRFLRLSQVAAALAAGDLLDWRAEVLHGNDWQTALAPVFLRDRADRPATVFGIHNLAYRGLFPAELYPRLGLPAELWQPEGLEFYGQLAFIKGSLVFADTLVTVSPTYAREIQTPAFGWGLDGLLHHRRDRLFGIVNGIDTATWDPGSDRHLVAQYTGPDDRARAANRRAVARAVGLSEGEGPILGFVGRLVEQKGVDLILAALPRLLAAGAQLALLGAGDHRLETALRAAAEQHPGQVGVVIGYDEALAHQIEAGSDLFLMPSRFEPCGLNQLYSLRYGTPPVVYPTGGLADTVVDVDAHPQSGNGFHLAASDGAALAAAVERALAHWQDRPTWHAIQARGMAGTYSWAASAQAYQDLYRQVVASRG</sequence>
<protein>
    <recommendedName>
        <fullName evidence="1">Glycogen synthase</fullName>
        <ecNumber evidence="1">2.4.1.21</ecNumber>
    </recommendedName>
    <alternativeName>
        <fullName evidence="1">Starch [bacterial glycogen] synthase</fullName>
    </alternativeName>
</protein>